<evidence type="ECO:0000255" key="1">
    <source>
        <dbReference type="HAMAP-Rule" id="MF_01588"/>
    </source>
</evidence>
<keyword id="KW-0227">DNA damage</keyword>
<keyword id="KW-0234">DNA repair</keyword>
<keyword id="KW-0235">DNA replication</keyword>
<keyword id="KW-0436">Ligase</keyword>
<keyword id="KW-0460">Magnesium</keyword>
<keyword id="KW-0464">Manganese</keyword>
<keyword id="KW-0479">Metal-binding</keyword>
<keyword id="KW-0520">NAD</keyword>
<keyword id="KW-0862">Zinc</keyword>
<name>DNLJ_DEHMB</name>
<dbReference type="EC" id="6.5.1.2" evidence="1"/>
<dbReference type="EMBL" id="CP000688">
    <property type="protein sequence ID" value="ABQ17156.1"/>
    <property type="molecule type" value="Genomic_DNA"/>
</dbReference>
<dbReference type="SMR" id="A5FRL4"/>
<dbReference type="KEGG" id="deb:DehaBAV1_0571"/>
<dbReference type="PATRIC" id="fig|216389.18.peg.617"/>
<dbReference type="HOGENOM" id="CLU_007764_2_1_0"/>
<dbReference type="GO" id="GO:0005829">
    <property type="term" value="C:cytosol"/>
    <property type="evidence" value="ECO:0007669"/>
    <property type="project" value="TreeGrafter"/>
</dbReference>
<dbReference type="GO" id="GO:0003677">
    <property type="term" value="F:DNA binding"/>
    <property type="evidence" value="ECO:0007669"/>
    <property type="project" value="InterPro"/>
</dbReference>
<dbReference type="GO" id="GO:0003911">
    <property type="term" value="F:DNA ligase (NAD+) activity"/>
    <property type="evidence" value="ECO:0007669"/>
    <property type="project" value="UniProtKB-UniRule"/>
</dbReference>
<dbReference type="GO" id="GO:0046872">
    <property type="term" value="F:metal ion binding"/>
    <property type="evidence" value="ECO:0007669"/>
    <property type="project" value="UniProtKB-KW"/>
</dbReference>
<dbReference type="GO" id="GO:0006281">
    <property type="term" value="P:DNA repair"/>
    <property type="evidence" value="ECO:0007669"/>
    <property type="project" value="UniProtKB-KW"/>
</dbReference>
<dbReference type="GO" id="GO:0006260">
    <property type="term" value="P:DNA replication"/>
    <property type="evidence" value="ECO:0007669"/>
    <property type="project" value="UniProtKB-KW"/>
</dbReference>
<dbReference type="CDD" id="cd17748">
    <property type="entry name" value="BRCT_DNA_ligase_like"/>
    <property type="match status" value="1"/>
</dbReference>
<dbReference type="CDD" id="cd00114">
    <property type="entry name" value="LIGANc"/>
    <property type="match status" value="1"/>
</dbReference>
<dbReference type="FunFam" id="1.10.150.20:FF:000006">
    <property type="entry name" value="DNA ligase"/>
    <property type="match status" value="1"/>
</dbReference>
<dbReference type="FunFam" id="1.10.150.20:FF:000007">
    <property type="entry name" value="DNA ligase"/>
    <property type="match status" value="1"/>
</dbReference>
<dbReference type="FunFam" id="1.10.287.610:FF:000002">
    <property type="entry name" value="DNA ligase"/>
    <property type="match status" value="1"/>
</dbReference>
<dbReference type="FunFam" id="3.30.470.30:FF:000001">
    <property type="entry name" value="DNA ligase"/>
    <property type="match status" value="1"/>
</dbReference>
<dbReference type="Gene3D" id="6.20.10.30">
    <property type="match status" value="1"/>
</dbReference>
<dbReference type="Gene3D" id="1.10.150.20">
    <property type="entry name" value="5' to 3' exonuclease, C-terminal subdomain"/>
    <property type="match status" value="2"/>
</dbReference>
<dbReference type="Gene3D" id="3.40.50.10190">
    <property type="entry name" value="BRCT domain"/>
    <property type="match status" value="1"/>
</dbReference>
<dbReference type="Gene3D" id="3.30.470.30">
    <property type="entry name" value="DNA ligase/mRNA capping enzyme"/>
    <property type="match status" value="1"/>
</dbReference>
<dbReference type="Gene3D" id="1.10.287.610">
    <property type="entry name" value="Helix hairpin bin"/>
    <property type="match status" value="1"/>
</dbReference>
<dbReference type="Gene3D" id="2.40.50.140">
    <property type="entry name" value="Nucleic acid-binding proteins"/>
    <property type="match status" value="1"/>
</dbReference>
<dbReference type="HAMAP" id="MF_01588">
    <property type="entry name" value="DNA_ligase_A"/>
    <property type="match status" value="1"/>
</dbReference>
<dbReference type="InterPro" id="IPR001357">
    <property type="entry name" value="BRCT_dom"/>
</dbReference>
<dbReference type="InterPro" id="IPR036420">
    <property type="entry name" value="BRCT_dom_sf"/>
</dbReference>
<dbReference type="InterPro" id="IPR041663">
    <property type="entry name" value="DisA/LigA_HHH"/>
</dbReference>
<dbReference type="InterPro" id="IPR001679">
    <property type="entry name" value="DNA_ligase"/>
</dbReference>
<dbReference type="InterPro" id="IPR018239">
    <property type="entry name" value="DNA_ligase_AS"/>
</dbReference>
<dbReference type="InterPro" id="IPR033136">
    <property type="entry name" value="DNA_ligase_CS"/>
</dbReference>
<dbReference type="InterPro" id="IPR013839">
    <property type="entry name" value="DNAligase_adenylation"/>
</dbReference>
<dbReference type="InterPro" id="IPR013840">
    <property type="entry name" value="DNAligase_N"/>
</dbReference>
<dbReference type="InterPro" id="IPR003583">
    <property type="entry name" value="Hlx-hairpin-Hlx_DNA-bd_motif"/>
</dbReference>
<dbReference type="InterPro" id="IPR012340">
    <property type="entry name" value="NA-bd_OB-fold"/>
</dbReference>
<dbReference type="InterPro" id="IPR004150">
    <property type="entry name" value="NAD_DNA_ligase_OB"/>
</dbReference>
<dbReference type="InterPro" id="IPR010994">
    <property type="entry name" value="RuvA_2-like"/>
</dbReference>
<dbReference type="InterPro" id="IPR004149">
    <property type="entry name" value="Znf_DNAligase_C4"/>
</dbReference>
<dbReference type="NCBIfam" id="TIGR00575">
    <property type="entry name" value="dnlj"/>
    <property type="match status" value="1"/>
</dbReference>
<dbReference type="NCBIfam" id="NF005932">
    <property type="entry name" value="PRK07956.1"/>
    <property type="match status" value="1"/>
</dbReference>
<dbReference type="PANTHER" id="PTHR23389">
    <property type="entry name" value="CHROMOSOME TRANSMISSION FIDELITY FACTOR 18"/>
    <property type="match status" value="1"/>
</dbReference>
<dbReference type="PANTHER" id="PTHR23389:SF9">
    <property type="entry name" value="DNA LIGASE"/>
    <property type="match status" value="1"/>
</dbReference>
<dbReference type="Pfam" id="PF00533">
    <property type="entry name" value="BRCT"/>
    <property type="match status" value="1"/>
</dbReference>
<dbReference type="Pfam" id="PF01653">
    <property type="entry name" value="DNA_ligase_aden"/>
    <property type="match status" value="1"/>
</dbReference>
<dbReference type="Pfam" id="PF03120">
    <property type="entry name" value="DNA_ligase_OB"/>
    <property type="match status" value="1"/>
</dbReference>
<dbReference type="Pfam" id="PF03119">
    <property type="entry name" value="DNA_ligase_ZBD"/>
    <property type="match status" value="1"/>
</dbReference>
<dbReference type="Pfam" id="PF12826">
    <property type="entry name" value="HHH_2"/>
    <property type="match status" value="1"/>
</dbReference>
<dbReference type="Pfam" id="PF14520">
    <property type="entry name" value="HHH_5"/>
    <property type="match status" value="1"/>
</dbReference>
<dbReference type="Pfam" id="PF22745">
    <property type="entry name" value="Nlig-Ia"/>
    <property type="match status" value="1"/>
</dbReference>
<dbReference type="PIRSF" id="PIRSF001604">
    <property type="entry name" value="LigA"/>
    <property type="match status" value="1"/>
</dbReference>
<dbReference type="SMART" id="SM00292">
    <property type="entry name" value="BRCT"/>
    <property type="match status" value="1"/>
</dbReference>
<dbReference type="SMART" id="SM00278">
    <property type="entry name" value="HhH1"/>
    <property type="match status" value="2"/>
</dbReference>
<dbReference type="SMART" id="SM00532">
    <property type="entry name" value="LIGANc"/>
    <property type="match status" value="1"/>
</dbReference>
<dbReference type="SUPFAM" id="SSF52113">
    <property type="entry name" value="BRCT domain"/>
    <property type="match status" value="1"/>
</dbReference>
<dbReference type="SUPFAM" id="SSF56091">
    <property type="entry name" value="DNA ligase/mRNA capping enzyme, catalytic domain"/>
    <property type="match status" value="1"/>
</dbReference>
<dbReference type="SUPFAM" id="SSF50249">
    <property type="entry name" value="Nucleic acid-binding proteins"/>
    <property type="match status" value="1"/>
</dbReference>
<dbReference type="SUPFAM" id="SSF47781">
    <property type="entry name" value="RuvA domain 2-like"/>
    <property type="match status" value="1"/>
</dbReference>
<dbReference type="PROSITE" id="PS50172">
    <property type="entry name" value="BRCT"/>
    <property type="match status" value="1"/>
</dbReference>
<dbReference type="PROSITE" id="PS01055">
    <property type="entry name" value="DNA_LIGASE_N1"/>
    <property type="match status" value="1"/>
</dbReference>
<dbReference type="PROSITE" id="PS01056">
    <property type="entry name" value="DNA_LIGASE_N2"/>
    <property type="match status" value="1"/>
</dbReference>
<gene>
    <name evidence="1" type="primary">ligA</name>
    <name type="ordered locus">DehaBAV1_0571</name>
</gene>
<reference key="1">
    <citation type="submission" date="2007-05" db="EMBL/GenBank/DDBJ databases">
        <title>Complete sequence of Dehalococcoides sp. BAV1.</title>
        <authorList>
            <consortium name="US DOE Joint Genome Institute"/>
            <person name="Copeland A."/>
            <person name="Lucas S."/>
            <person name="Lapidus A."/>
            <person name="Barry K."/>
            <person name="Detter J.C."/>
            <person name="Glavina del Rio T."/>
            <person name="Hammon N."/>
            <person name="Israni S."/>
            <person name="Pitluck S."/>
            <person name="Lowry S."/>
            <person name="Clum A."/>
            <person name="Schmutz J."/>
            <person name="Larimer F."/>
            <person name="Land M."/>
            <person name="Hauser L."/>
            <person name="Kyrpides N."/>
            <person name="Kim E."/>
            <person name="Ritalahti K.M."/>
            <person name="Loeffler F."/>
            <person name="Richardson P."/>
        </authorList>
    </citation>
    <scope>NUCLEOTIDE SEQUENCE [LARGE SCALE GENOMIC DNA]</scope>
    <source>
        <strain>ATCC BAA-2100 / JCM 16839 / KCTC 5957 / BAV1</strain>
    </source>
</reference>
<proteinExistence type="inferred from homology"/>
<sequence length="680" mass="75669">MEDMFSPLIEVENLRREINRHNQLYYVQDNPEISDAQYDTLIRRLKELEEAHPELVTPDSPTQRVGAEPLKAFGIVNHPYPLLSLANAFSDTELEAWYQRVKKLLGNIPFQIDCEPKMDGLAVALTYRNGKFATGATRGDGFQGENITRNLRTIHSIPLNAEPNAPPVFEVRGEVYLSKNGFAKLNRERADKGLPLFANPRNAAAGSLRQLDPSVTAERPLDIFIYALGYSEDSLLPDSHWQILDYFSKIGFRINPLNRLVNTLEEAKEYYRQMAANRASLPYEADGVVFKVDSVSLQHRLGDVGREPRWAIAYKFPAEQVMTRLKKIGISVGRTGTLNPFAVLEPVNVGGVVVKQAALHNEDDILRKDIREGDTVIIQRAGEVIPEVVAPVLSKRNPESKPFRMEESLFNPNLNRTACPVCGGEIYRPAGEAMHYCANVSCPAQFERQLEHFVSRGAMDIRGIGESLSVILAQQGLVKNVSDLYYLTTADLLQLPRMGEKSADNIIDAIADSKTRPLDRVIFGLGVRHVGNETATLLSRHYGNIWALAKTGLGELQTIPDIGDKIASSIVAYFSEEKNVAVIRRLEEAGVRLTSDQKPVNKNMPFSGMEFVVTGKLESFSREEAQEKIRSLGGTAKDNVTKATNYLVVGADAGSKLTKARSMGVKELSEREFINMLEQS</sequence>
<accession>A5FRL4</accession>
<protein>
    <recommendedName>
        <fullName evidence="1">DNA ligase</fullName>
        <ecNumber evidence="1">6.5.1.2</ecNumber>
    </recommendedName>
    <alternativeName>
        <fullName evidence="1">Polydeoxyribonucleotide synthase [NAD(+)]</fullName>
    </alternativeName>
</protein>
<organism>
    <name type="scientific">Dehalococcoides mccartyi (strain ATCC BAA-2100 / JCM 16839 / KCTC 5957 / BAV1)</name>
    <dbReference type="NCBI Taxonomy" id="216389"/>
    <lineage>
        <taxon>Bacteria</taxon>
        <taxon>Bacillati</taxon>
        <taxon>Chloroflexota</taxon>
        <taxon>Dehalococcoidia</taxon>
        <taxon>Dehalococcoidales</taxon>
        <taxon>Dehalococcoidaceae</taxon>
        <taxon>Dehalococcoides</taxon>
    </lineage>
</organism>
<feature type="chain" id="PRO_0000340344" description="DNA ligase">
    <location>
        <begin position="1"/>
        <end position="680"/>
    </location>
</feature>
<feature type="domain" description="BRCT" evidence="1">
    <location>
        <begin position="601"/>
        <end position="680"/>
    </location>
</feature>
<feature type="active site" description="N6-AMP-lysine intermediate" evidence="1">
    <location>
        <position position="117"/>
    </location>
</feature>
<feature type="binding site" evidence="1">
    <location>
        <begin position="35"/>
        <end position="39"/>
    </location>
    <ligand>
        <name>NAD(+)</name>
        <dbReference type="ChEBI" id="CHEBI:57540"/>
    </ligand>
</feature>
<feature type="binding site" evidence="1">
    <location>
        <begin position="84"/>
        <end position="85"/>
    </location>
    <ligand>
        <name>NAD(+)</name>
        <dbReference type="ChEBI" id="CHEBI:57540"/>
    </ligand>
</feature>
<feature type="binding site" evidence="1">
    <location>
        <position position="115"/>
    </location>
    <ligand>
        <name>NAD(+)</name>
        <dbReference type="ChEBI" id="CHEBI:57540"/>
    </ligand>
</feature>
<feature type="binding site" evidence="1">
    <location>
        <position position="138"/>
    </location>
    <ligand>
        <name>NAD(+)</name>
        <dbReference type="ChEBI" id="CHEBI:57540"/>
    </ligand>
</feature>
<feature type="binding site" evidence="1">
    <location>
        <position position="174"/>
    </location>
    <ligand>
        <name>NAD(+)</name>
        <dbReference type="ChEBI" id="CHEBI:57540"/>
    </ligand>
</feature>
<feature type="binding site" evidence="1">
    <location>
        <position position="291"/>
    </location>
    <ligand>
        <name>NAD(+)</name>
        <dbReference type="ChEBI" id="CHEBI:57540"/>
    </ligand>
</feature>
<feature type="binding site" evidence="1">
    <location>
        <position position="315"/>
    </location>
    <ligand>
        <name>NAD(+)</name>
        <dbReference type="ChEBI" id="CHEBI:57540"/>
    </ligand>
</feature>
<feature type="binding site" evidence="1">
    <location>
        <position position="419"/>
    </location>
    <ligand>
        <name>Zn(2+)</name>
        <dbReference type="ChEBI" id="CHEBI:29105"/>
    </ligand>
</feature>
<feature type="binding site" evidence="1">
    <location>
        <position position="422"/>
    </location>
    <ligand>
        <name>Zn(2+)</name>
        <dbReference type="ChEBI" id="CHEBI:29105"/>
    </ligand>
</feature>
<feature type="binding site" evidence="1">
    <location>
        <position position="437"/>
    </location>
    <ligand>
        <name>Zn(2+)</name>
        <dbReference type="ChEBI" id="CHEBI:29105"/>
    </ligand>
</feature>
<feature type="binding site" evidence="1">
    <location>
        <position position="442"/>
    </location>
    <ligand>
        <name>Zn(2+)</name>
        <dbReference type="ChEBI" id="CHEBI:29105"/>
    </ligand>
</feature>
<comment type="function">
    <text evidence="1">DNA ligase that catalyzes the formation of phosphodiester linkages between 5'-phosphoryl and 3'-hydroxyl groups in double-stranded DNA using NAD as a coenzyme and as the energy source for the reaction. It is essential for DNA replication and repair of damaged DNA.</text>
</comment>
<comment type="catalytic activity">
    <reaction evidence="1">
        <text>NAD(+) + (deoxyribonucleotide)n-3'-hydroxyl + 5'-phospho-(deoxyribonucleotide)m = (deoxyribonucleotide)n+m + AMP + beta-nicotinamide D-nucleotide.</text>
        <dbReference type="EC" id="6.5.1.2"/>
    </reaction>
</comment>
<comment type="cofactor">
    <cofactor evidence="1">
        <name>Mg(2+)</name>
        <dbReference type="ChEBI" id="CHEBI:18420"/>
    </cofactor>
    <cofactor evidence="1">
        <name>Mn(2+)</name>
        <dbReference type="ChEBI" id="CHEBI:29035"/>
    </cofactor>
</comment>
<comment type="similarity">
    <text evidence="1">Belongs to the NAD-dependent DNA ligase family. LigA subfamily.</text>
</comment>